<reference key="1">
    <citation type="journal article" date="1998" name="Nature">
        <title>Deciphering the biology of Mycobacterium tuberculosis from the complete genome sequence.</title>
        <authorList>
            <person name="Cole S.T."/>
            <person name="Brosch R."/>
            <person name="Parkhill J."/>
            <person name="Garnier T."/>
            <person name="Churcher C.M."/>
            <person name="Harris D.E."/>
            <person name="Gordon S.V."/>
            <person name="Eiglmeier K."/>
            <person name="Gas S."/>
            <person name="Barry C.E. III"/>
            <person name="Tekaia F."/>
            <person name="Badcock K."/>
            <person name="Basham D."/>
            <person name="Brown D."/>
            <person name="Chillingworth T."/>
            <person name="Connor R."/>
            <person name="Davies R.M."/>
            <person name="Devlin K."/>
            <person name="Feltwell T."/>
            <person name="Gentles S."/>
            <person name="Hamlin N."/>
            <person name="Holroyd S."/>
            <person name="Hornsby T."/>
            <person name="Jagels K."/>
            <person name="Krogh A."/>
            <person name="McLean J."/>
            <person name="Moule S."/>
            <person name="Murphy L.D."/>
            <person name="Oliver S."/>
            <person name="Osborne J."/>
            <person name="Quail M.A."/>
            <person name="Rajandream M.A."/>
            <person name="Rogers J."/>
            <person name="Rutter S."/>
            <person name="Seeger K."/>
            <person name="Skelton S."/>
            <person name="Squares S."/>
            <person name="Squares R."/>
            <person name="Sulston J.E."/>
            <person name="Taylor K."/>
            <person name="Whitehead S."/>
            <person name="Barrell B.G."/>
        </authorList>
    </citation>
    <scope>NUCLEOTIDE SEQUENCE [LARGE SCALE GENOMIC DNA]</scope>
    <source>
        <strain>ATCC 25618 / H37Rv</strain>
    </source>
</reference>
<reference key="2">
    <citation type="journal article" date="2011" name="Mol. Cell. Proteomics">
        <title>Proteogenomic analysis of Mycobacterium tuberculosis by high resolution mass spectrometry.</title>
        <authorList>
            <person name="Kelkar D.S."/>
            <person name="Kumar D."/>
            <person name="Kumar P."/>
            <person name="Balakrishnan L."/>
            <person name="Muthusamy B."/>
            <person name="Yadav A.K."/>
            <person name="Shrivastava P."/>
            <person name="Marimuthu A."/>
            <person name="Anand S."/>
            <person name="Sundaram H."/>
            <person name="Kingsbury R."/>
            <person name="Harsha H.C."/>
            <person name="Nair B."/>
            <person name="Prasad T.S."/>
            <person name="Chauhan D.S."/>
            <person name="Katoch K."/>
            <person name="Katoch V.M."/>
            <person name="Kumar P."/>
            <person name="Chaerkady R."/>
            <person name="Ramachandran S."/>
            <person name="Dash D."/>
            <person name="Pandey A."/>
        </authorList>
    </citation>
    <scope>IDENTIFICATION BY MASS SPECTROMETRY [LARGE SCALE ANALYSIS]</scope>
    <source>
        <strain>ATCC 25618 / H37Rv</strain>
    </source>
</reference>
<reference key="3">
    <citation type="journal article" date="2007" name="J. Mol. Biol.">
        <title>The structure and computational analysis of Mycobacterium tuberculosis protein CitE suggest a novel enzymatic function.</title>
        <authorList>
            <person name="Goulding C.W."/>
            <person name="Bowers P.M."/>
            <person name="Segelke B."/>
            <person name="Lekin T."/>
            <person name="Kim C.Y."/>
            <person name="Terwilliger T.C."/>
            <person name="Eisenberg D."/>
        </authorList>
    </citation>
    <scope>X-RAY CRYSTALLOGRAPHY (1.65 ANGSTROMS) IN COMPLEX WITH SUBSTRATE ANALOG AND MAGNESIUM IONS</scope>
    <scope>SUBUNIT</scope>
</reference>
<gene>
    <name type="primary">citE</name>
    <name type="ordered locus">Rv2498c</name>
</gene>
<protein>
    <recommendedName>
        <fullName>Citrate lyase subunit beta-like protein</fullName>
        <ecNumber>4.1.-.-</ecNumber>
    </recommendedName>
</protein>
<sequence length="273" mass="28886">MNLRAAGPGWLFCPADRPERFAKAAAAADVVILDLEDGVAEAQKPAARNALRDTPLDPERTVVRINAGGTADQARDLEALAGTAYTTVMLPKAESAAQVIELAPRDVIALVETARGAVCAAEIAAADPTVGMMWGAEDLIATLGGSSSRRADGAYRDVARHVRSTILLAASAFGRLALDAVHLDILDVEGLQEEARDAAAVGFDVTVCIHPSQIPVVRKAYRPSHEKLAWARRVLAASRSERGAFAFEGQMVDSPVLTHAETMLRRAGEATSE</sequence>
<proteinExistence type="evidence at protein level"/>
<dbReference type="EC" id="4.1.-.-"/>
<dbReference type="EMBL" id="AL123456">
    <property type="protein sequence ID" value="CCP45292.1"/>
    <property type="molecule type" value="Genomic_DNA"/>
</dbReference>
<dbReference type="PIR" id="B70550">
    <property type="entry name" value="B70550"/>
</dbReference>
<dbReference type="RefSeq" id="NP_217014.1">
    <property type="nucleotide sequence ID" value="NC_000962.3"/>
</dbReference>
<dbReference type="RefSeq" id="WP_003412766.1">
    <property type="nucleotide sequence ID" value="NZ_NVQJ01000063.1"/>
</dbReference>
<dbReference type="PDB" id="1U5H">
    <property type="method" value="X-ray"/>
    <property type="resolution" value="1.65 A"/>
    <property type="chains" value="A=1-273"/>
</dbReference>
<dbReference type="PDB" id="1U5V">
    <property type="method" value="X-ray"/>
    <property type="resolution" value="1.85 A"/>
    <property type="chains" value="A=1-273"/>
</dbReference>
<dbReference type="PDB" id="1Z6K">
    <property type="method" value="X-ray"/>
    <property type="resolution" value="2.30 A"/>
    <property type="chains" value="A=1-273"/>
</dbReference>
<dbReference type="PDB" id="6AQ4">
    <property type="method" value="X-ray"/>
    <property type="resolution" value="1.82 A"/>
    <property type="chains" value="A/B/C=1-273"/>
</dbReference>
<dbReference type="PDB" id="6ARB">
    <property type="method" value="X-ray"/>
    <property type="resolution" value="1.72 A"/>
    <property type="chains" value="A/B/C=1-273"/>
</dbReference>
<dbReference type="PDB" id="6AS5">
    <property type="method" value="X-ray"/>
    <property type="resolution" value="2.04 A"/>
    <property type="chains" value="A/B/C=1-273"/>
</dbReference>
<dbReference type="PDB" id="6CHU">
    <property type="method" value="X-ray"/>
    <property type="resolution" value="1.61 A"/>
    <property type="chains" value="A=1-273"/>
</dbReference>
<dbReference type="PDB" id="6CJ3">
    <property type="method" value="X-ray"/>
    <property type="resolution" value="1.73 A"/>
    <property type="chains" value="A=1-273"/>
</dbReference>
<dbReference type="PDB" id="6CJ4">
    <property type="method" value="X-ray"/>
    <property type="resolution" value="1.73 A"/>
    <property type="chains" value="A=1-273"/>
</dbReference>
<dbReference type="PDBsum" id="1U5H"/>
<dbReference type="PDBsum" id="1U5V"/>
<dbReference type="PDBsum" id="1Z6K"/>
<dbReference type="PDBsum" id="6AQ4"/>
<dbReference type="PDBsum" id="6ARB"/>
<dbReference type="PDBsum" id="6AS5"/>
<dbReference type="PDBsum" id="6CHU"/>
<dbReference type="PDBsum" id="6CJ3"/>
<dbReference type="PDBsum" id="6CJ4"/>
<dbReference type="SMR" id="P9WPE1"/>
<dbReference type="FunCoup" id="P9WPE1">
    <property type="interactions" value="267"/>
</dbReference>
<dbReference type="STRING" id="83332.Rv2498c"/>
<dbReference type="DrugBank" id="DB01942">
    <property type="generic name" value="Formic acid"/>
</dbReference>
<dbReference type="PaxDb" id="83332-Rv2498c"/>
<dbReference type="DNASU" id="887466"/>
<dbReference type="GeneID" id="45426492"/>
<dbReference type="GeneID" id="887466"/>
<dbReference type="KEGG" id="mtu:Rv2498c"/>
<dbReference type="KEGG" id="mtv:RVBD_2498c"/>
<dbReference type="TubercuList" id="Rv2498c"/>
<dbReference type="eggNOG" id="COG2301">
    <property type="taxonomic scope" value="Bacteria"/>
</dbReference>
<dbReference type="InParanoid" id="P9WPE1"/>
<dbReference type="OrthoDB" id="5172636at2"/>
<dbReference type="PhylomeDB" id="P9WPE1"/>
<dbReference type="EvolutionaryTrace" id="P9WPE1"/>
<dbReference type="Proteomes" id="UP000001584">
    <property type="component" value="Chromosome"/>
</dbReference>
<dbReference type="GO" id="GO:0016829">
    <property type="term" value="F:lyase activity"/>
    <property type="evidence" value="ECO:0007669"/>
    <property type="project" value="UniProtKB-KW"/>
</dbReference>
<dbReference type="GO" id="GO:0000287">
    <property type="term" value="F:magnesium ion binding"/>
    <property type="evidence" value="ECO:0000353"/>
    <property type="project" value="MTBBASE"/>
</dbReference>
<dbReference type="GO" id="GO:0006107">
    <property type="term" value="P:oxaloacetate metabolic process"/>
    <property type="evidence" value="ECO:0000353"/>
    <property type="project" value="MTBBASE"/>
</dbReference>
<dbReference type="FunFam" id="3.20.20.60:FF:000038">
    <property type="entry name" value="Citrate lyase subunit beta-like protein"/>
    <property type="match status" value="1"/>
</dbReference>
<dbReference type="Gene3D" id="3.20.20.60">
    <property type="entry name" value="Phosphoenolpyruvate-binding domains"/>
    <property type="match status" value="1"/>
</dbReference>
<dbReference type="InterPro" id="IPR005000">
    <property type="entry name" value="Aldolase/citrate-lyase_domain"/>
</dbReference>
<dbReference type="InterPro" id="IPR011206">
    <property type="entry name" value="Citrate_lyase_beta/mcl1/mcl2"/>
</dbReference>
<dbReference type="InterPro" id="IPR015813">
    <property type="entry name" value="Pyrv/PenolPyrv_kinase-like_dom"/>
</dbReference>
<dbReference type="InterPro" id="IPR040442">
    <property type="entry name" value="Pyrv_kinase-like_dom_sf"/>
</dbReference>
<dbReference type="PANTHER" id="PTHR32308:SF10">
    <property type="entry name" value="CITRATE LYASE SUBUNIT BETA"/>
    <property type="match status" value="1"/>
</dbReference>
<dbReference type="PANTHER" id="PTHR32308">
    <property type="entry name" value="LYASE BETA SUBUNIT, PUTATIVE (AFU_ORTHOLOGUE AFUA_4G13030)-RELATED"/>
    <property type="match status" value="1"/>
</dbReference>
<dbReference type="Pfam" id="PF03328">
    <property type="entry name" value="HpcH_HpaI"/>
    <property type="match status" value="1"/>
</dbReference>
<dbReference type="PIRSF" id="PIRSF015582">
    <property type="entry name" value="Cit_lyase_B"/>
    <property type="match status" value="1"/>
</dbReference>
<dbReference type="SUPFAM" id="SSF51621">
    <property type="entry name" value="Phosphoenolpyruvate/pyruvate domain"/>
    <property type="match status" value="1"/>
</dbReference>
<evidence type="ECO:0000269" key="1">
    <source>
    </source>
</evidence>
<evidence type="ECO:0000305" key="2"/>
<evidence type="ECO:0007829" key="3">
    <source>
        <dbReference type="PDB" id="6ARB"/>
    </source>
</evidence>
<evidence type="ECO:0007829" key="4">
    <source>
        <dbReference type="PDB" id="6CHU"/>
    </source>
</evidence>
<feature type="chain" id="PRO_0000286388" description="Citrate lyase subunit beta-like protein">
    <location>
        <begin position="1"/>
        <end position="273"/>
    </location>
</feature>
<feature type="binding site">
    <location>
        <position position="64"/>
    </location>
    <ligand>
        <name>substrate</name>
    </ligand>
</feature>
<feature type="binding site">
    <location>
        <position position="112"/>
    </location>
    <ligand>
        <name>Mg(2+)</name>
        <dbReference type="ChEBI" id="CHEBI:18420"/>
    </ligand>
</feature>
<feature type="binding site">
    <location>
        <position position="112"/>
    </location>
    <ligand>
        <name>substrate</name>
    </ligand>
</feature>
<feature type="binding site">
    <location>
        <position position="138"/>
    </location>
    <ligand>
        <name>Mg(2+)</name>
        <dbReference type="ChEBI" id="CHEBI:18420"/>
    </ligand>
</feature>
<feature type="helix" evidence="4">
    <location>
        <begin position="3"/>
        <end position="5"/>
    </location>
</feature>
<feature type="strand" evidence="4">
    <location>
        <begin position="8"/>
        <end position="14"/>
    </location>
</feature>
<feature type="helix" evidence="4">
    <location>
        <begin position="18"/>
        <end position="20"/>
    </location>
</feature>
<feature type="helix" evidence="4">
    <location>
        <begin position="21"/>
        <end position="27"/>
    </location>
</feature>
<feature type="strand" evidence="4">
    <location>
        <begin position="29"/>
        <end position="36"/>
    </location>
</feature>
<feature type="helix" evidence="4">
    <location>
        <begin position="41"/>
        <end position="43"/>
    </location>
</feature>
<feature type="helix" evidence="4">
    <location>
        <begin position="44"/>
        <end position="53"/>
    </location>
</feature>
<feature type="strand" evidence="4">
    <location>
        <begin position="60"/>
        <end position="64"/>
    </location>
</feature>
<feature type="helix" evidence="4">
    <location>
        <begin position="71"/>
        <end position="81"/>
    </location>
</feature>
<feature type="strand" evidence="4">
    <location>
        <begin position="87"/>
        <end position="90"/>
    </location>
</feature>
<feature type="helix" evidence="4">
    <location>
        <begin position="96"/>
        <end position="100"/>
    </location>
</feature>
<feature type="turn" evidence="4">
    <location>
        <begin position="101"/>
        <end position="104"/>
    </location>
</feature>
<feature type="strand" evidence="4">
    <location>
        <begin position="105"/>
        <end position="111"/>
    </location>
</feature>
<feature type="helix" evidence="4">
    <location>
        <begin position="114"/>
        <end position="118"/>
    </location>
</feature>
<feature type="helix" evidence="4">
    <location>
        <begin position="120"/>
        <end position="125"/>
    </location>
</feature>
<feature type="strand" evidence="4">
    <location>
        <begin position="129"/>
        <end position="134"/>
    </location>
</feature>
<feature type="helix" evidence="4">
    <location>
        <begin position="136"/>
        <end position="143"/>
    </location>
</feature>
<feature type="helix" evidence="4">
    <location>
        <begin position="157"/>
        <end position="172"/>
    </location>
</feature>
<feature type="strand" evidence="4">
    <location>
        <begin position="176"/>
        <end position="179"/>
    </location>
</feature>
<feature type="helix" evidence="4">
    <location>
        <begin position="188"/>
        <end position="201"/>
    </location>
</feature>
<feature type="strand" evidence="4">
    <location>
        <begin position="204"/>
        <end position="210"/>
    </location>
</feature>
<feature type="helix" evidence="4">
    <location>
        <begin position="213"/>
        <end position="220"/>
    </location>
</feature>
<feature type="helix" evidence="3">
    <location>
        <begin position="225"/>
        <end position="238"/>
    </location>
</feature>
<feature type="strand" evidence="3">
    <location>
        <begin position="243"/>
        <end position="247"/>
    </location>
</feature>
<feature type="strand" evidence="3">
    <location>
        <begin position="250"/>
        <end position="252"/>
    </location>
</feature>
<feature type="helix" evidence="4">
    <location>
        <begin position="254"/>
        <end position="264"/>
    </location>
</feature>
<accession>P9WPE1</accession>
<accession>L0TCQ1</accession>
<accession>O06162</accession>
<accession>Q7D713</accession>
<name>CITEL_MYCTU</name>
<comment type="function">
    <text evidence="2">May play a role in fatty acid biosynthesis.</text>
</comment>
<comment type="cofactor">
    <cofactor>
        <name>Mg(2+)</name>
        <dbReference type="ChEBI" id="CHEBI:18420"/>
    </cofactor>
    <text>Binds 1 Mg(2+) ion per subunit.</text>
</comment>
<comment type="subunit">
    <text evidence="1">Homotrimer.</text>
</comment>
<comment type="similarity">
    <text evidence="2">Belongs to the HpcH/HpaI aldolase family. Citrate lyase beta subunit-like subfamily.</text>
</comment>
<comment type="caution">
    <text evidence="2">This organism lacks the other subunits that are necessary for ATP-independent citrate lyase activity. Even though this protein has clear similarity to citrate lyase beta subunit, it is expected to have a somewhat different enzyme activity.</text>
</comment>
<organism>
    <name type="scientific">Mycobacterium tuberculosis (strain ATCC 25618 / H37Rv)</name>
    <dbReference type="NCBI Taxonomy" id="83332"/>
    <lineage>
        <taxon>Bacteria</taxon>
        <taxon>Bacillati</taxon>
        <taxon>Actinomycetota</taxon>
        <taxon>Actinomycetes</taxon>
        <taxon>Mycobacteriales</taxon>
        <taxon>Mycobacteriaceae</taxon>
        <taxon>Mycobacterium</taxon>
        <taxon>Mycobacterium tuberculosis complex</taxon>
    </lineage>
</organism>
<keyword id="KW-0002">3D-structure</keyword>
<keyword id="KW-0456">Lyase</keyword>
<keyword id="KW-0460">Magnesium</keyword>
<keyword id="KW-0479">Metal-binding</keyword>
<keyword id="KW-1185">Reference proteome</keyword>